<evidence type="ECO:0000250" key="1"/>
<evidence type="ECO:0000305" key="2"/>
<sequence length="474" mass="54565">MNDKIVVDVLKLYLKRDPSLTEFHMLKSQYKNIQRVNIFNKEIFISLIKKNKKKFFSDIKSSPSDIKRSILTYFSKQENTYSIGKLYTIIELQSILVTTYTDVLGILTTKGPDLFTSNIYYNTSSMQSLARDALNFMNVAQMTDKTMGRHNVSSLVDNVNSLMEEYLRRHNKNCICYGSYSLHLLNPDVKYGDIDILQTNSRTFLIDLAFLIKFITGLNVVLLKVPYLKNYMVLKDQNDSHIIDSFNIRQDTMQSIPKVLIDNIYIVDPALQLMSMLKMFSQIDRLEDLAKNPEKLTVRLATLLEYVRVNYGINFISNQTKKNNMPMYSVIDIDKRIITVDTSNYDFPFKKCLVYLDESSLSSDILDLNADDAIDFENVSNSAFLINNNILYTYFSNTILMKSKTDIHEISSRGLSAHILIYQILTKGDIIKPLTDIVNSLIGVEKNPIYDIIPRDKKSGKHGIIDIEKDIITH</sequence>
<comment type="function">
    <text>Polymerase that creates the 3'-poly(A) tail of mRNA's.</text>
</comment>
<comment type="catalytic activity">
    <reaction>
        <text>RNA(n) + ATP = RNA(n)-3'-adenine ribonucleotide + diphosphate</text>
        <dbReference type="Rhea" id="RHEA:11332"/>
        <dbReference type="Rhea" id="RHEA-COMP:14527"/>
        <dbReference type="Rhea" id="RHEA-COMP:17347"/>
        <dbReference type="ChEBI" id="CHEBI:30616"/>
        <dbReference type="ChEBI" id="CHEBI:33019"/>
        <dbReference type="ChEBI" id="CHEBI:140395"/>
        <dbReference type="ChEBI" id="CHEBI:173115"/>
        <dbReference type="EC" id="2.7.7.19"/>
    </reaction>
</comment>
<comment type="subunit">
    <text evidence="1">Heterodimer of a large (catalytic) subunit and a small (regulatory) subunit.</text>
</comment>
<comment type="similarity">
    <text evidence="2">Belongs to the poxviridae poly(A) polymerase catalytic subunit family.</text>
</comment>
<accession>Q91MX5</accession>
<accession>Q77GP9</accession>
<accession>Q8JTW7</accession>
<name>PAP1_LSDV</name>
<proteinExistence type="inferred from homology"/>
<gene>
    <name type="primary">PAPL</name>
    <name type="ordered locus">LSDV032</name>
    <name type="ordered locus">LD032</name>
    <name type="ordered locus">LW032</name>
</gene>
<reference key="1">
    <citation type="journal article" date="2001" name="J. Virol.">
        <title>Genome of lumpy skin disease virus.</title>
        <authorList>
            <person name="Tulman E.R."/>
            <person name="Afonso C.L."/>
            <person name="Lu Z."/>
            <person name="Zsak L."/>
            <person name="Kutish G.F."/>
            <person name="Rock D.L."/>
        </authorList>
    </citation>
    <scope>NUCLEOTIDE SEQUENCE [LARGE SCALE GENOMIC DNA]</scope>
    <source>
        <strain>Isolate Neethling 2490</strain>
    </source>
</reference>
<reference key="2">
    <citation type="journal article" date="2003" name="Arch. Virol.">
        <title>Comparative sequence analysis of the South African vaccine strain and two virulent field isolates of Lumpy skin disease virus.</title>
        <authorList>
            <person name="Kara P.D."/>
            <person name="Afonso C.L."/>
            <person name="Wallace D.B."/>
            <person name="Kutish G.F."/>
            <person name="Abolnik C."/>
            <person name="Lu Z."/>
            <person name="Vreede F.T."/>
            <person name="Taljaard L.C.F."/>
            <person name="Zsak A."/>
            <person name="Viljoen G.J."/>
            <person name="Rock D.L."/>
        </authorList>
    </citation>
    <scope>NUCLEOTIDE SEQUENCE [LARGE SCALE GENOMIC DNA]</scope>
    <source>
        <strain>Isolate Neethling vaccine LW 1959</strain>
        <strain>Isolate Neethling Warmbaths LW</strain>
    </source>
</reference>
<feature type="chain" id="PRO_0000308934" description="Poly(A) polymerase catalytic subunit">
    <location>
        <begin position="1"/>
        <end position="474"/>
    </location>
</feature>
<feature type="active site" evidence="1">
    <location>
        <position position="193"/>
    </location>
</feature>
<feature type="active site" evidence="1">
    <location>
        <position position="195"/>
    </location>
</feature>
<feature type="sequence variant" description="In strain: isolate Neethling vaccine LW 1959.">
    <original>T</original>
    <variation>A</variation>
    <location>
        <position position="123"/>
    </location>
</feature>
<feature type="sequence variant" description="In strain: isolate Neethling vaccine LW 1959.">
    <original>A</original>
    <variation>T</variation>
    <location>
        <position position="270"/>
    </location>
</feature>
<organismHost>
    <name type="scientific">Bos taurus</name>
    <name type="common">Bovine</name>
    <dbReference type="NCBI Taxonomy" id="9913"/>
</organismHost>
<organism>
    <name type="scientific">Lumpy skin disease virus</name>
    <name type="common">LSDV</name>
    <dbReference type="NCBI Taxonomy" id="59509"/>
    <lineage>
        <taxon>Viruses</taxon>
        <taxon>Varidnaviria</taxon>
        <taxon>Bamfordvirae</taxon>
        <taxon>Nucleocytoviricota</taxon>
        <taxon>Pokkesviricetes</taxon>
        <taxon>Chitovirales</taxon>
        <taxon>Poxviridae</taxon>
        <taxon>Chordopoxvirinae</taxon>
        <taxon>Capripoxvirus</taxon>
    </lineage>
</organism>
<dbReference type="EC" id="2.7.7.19"/>
<dbReference type="EMBL" id="AF325528">
    <property type="protein sequence ID" value="AAK84993.1"/>
    <property type="molecule type" value="Genomic_DNA"/>
</dbReference>
<dbReference type="EMBL" id="AF409137">
    <property type="protein sequence ID" value="AAN02600.1"/>
    <property type="molecule type" value="Genomic_DNA"/>
</dbReference>
<dbReference type="EMBL" id="AF409138">
    <property type="protein sequence ID" value="AAN02757.1"/>
    <property type="molecule type" value="Genomic_DNA"/>
</dbReference>
<dbReference type="RefSeq" id="NP_150466.1">
    <property type="nucleotide sequence ID" value="NC_003027.1"/>
</dbReference>
<dbReference type="SMR" id="Q91MX5"/>
<dbReference type="GeneID" id="921671"/>
<dbReference type="KEGG" id="vg:921671"/>
<dbReference type="OrthoDB" id="3428at10239"/>
<dbReference type="Proteomes" id="UP000126568">
    <property type="component" value="Segment"/>
</dbReference>
<dbReference type="Proteomes" id="UP000127252">
    <property type="component" value="Genome"/>
</dbReference>
<dbReference type="Proteomes" id="UP000156762">
    <property type="component" value="Segment"/>
</dbReference>
<dbReference type="GO" id="GO:0005524">
    <property type="term" value="F:ATP binding"/>
    <property type="evidence" value="ECO:0007669"/>
    <property type="project" value="UniProtKB-KW"/>
</dbReference>
<dbReference type="GO" id="GO:1990817">
    <property type="term" value="F:poly(A) RNA polymerase activity"/>
    <property type="evidence" value="ECO:0007669"/>
    <property type="project" value="UniProtKB-EC"/>
</dbReference>
<dbReference type="GO" id="GO:0006397">
    <property type="term" value="P:mRNA processing"/>
    <property type="evidence" value="ECO:0007669"/>
    <property type="project" value="UniProtKB-KW"/>
</dbReference>
<dbReference type="CDD" id="cd20919">
    <property type="entry name" value="polyA_pol_Pox"/>
    <property type="match status" value="1"/>
</dbReference>
<dbReference type="Gene3D" id="1.20.1270.320">
    <property type="entry name" value="Poxvirus poly(A) polymerase, N domain"/>
    <property type="match status" value="1"/>
</dbReference>
<dbReference type="Gene3D" id="3.30.460.60">
    <property type="entry name" value="Poxvirus poly(A) polymerase, nucleotidyltransferase domain"/>
    <property type="match status" value="1"/>
</dbReference>
<dbReference type="InterPro" id="IPR004976">
    <property type="entry name" value="PolyA_pol_cat_Poxvir"/>
</dbReference>
<dbReference type="InterPro" id="IPR037265">
    <property type="entry name" value="PolyA_pol_cat_sf"/>
</dbReference>
<dbReference type="InterPro" id="IPR024231">
    <property type="entry name" value="PolyA_pol_nucTrfase_Poxvir"/>
</dbReference>
<dbReference type="InterPro" id="IPR038419">
    <property type="entry name" value="PolyA_pol_nucTrfase_sf_Poxvir"/>
</dbReference>
<dbReference type="InterPro" id="IPR024397">
    <property type="entry name" value="Poxvirus_polyA_pol_cat_C"/>
</dbReference>
<dbReference type="InterPro" id="IPR024398">
    <property type="entry name" value="Poxvirus_polyA_pol_cat_N"/>
</dbReference>
<dbReference type="InterPro" id="IPR038337">
    <property type="entry name" value="Poxvirus_polyA_pol_cat_N_sf"/>
</dbReference>
<dbReference type="Pfam" id="PF03296">
    <property type="entry name" value="Pox_polyA_pol"/>
    <property type="match status" value="1"/>
</dbReference>
<dbReference type="Pfam" id="PF12629">
    <property type="entry name" value="Pox_polyA_pol_C"/>
    <property type="match status" value="1"/>
</dbReference>
<dbReference type="Pfam" id="PF12630">
    <property type="entry name" value="Pox_polyA_pol_N"/>
    <property type="match status" value="1"/>
</dbReference>
<dbReference type="PIRSF" id="PIRSF015693">
    <property type="entry name" value="VAC-48L_nuct"/>
    <property type="match status" value="1"/>
</dbReference>
<dbReference type="SUPFAM" id="SSF160957">
    <property type="entry name" value="Poly(A) polymerase catalytic subunit-like"/>
    <property type="match status" value="1"/>
</dbReference>
<keyword id="KW-0067">ATP-binding</keyword>
<keyword id="KW-0507">mRNA processing</keyword>
<keyword id="KW-0547">Nucleotide-binding</keyword>
<keyword id="KW-0804">Transcription</keyword>
<keyword id="KW-0808">Transferase</keyword>
<protein>
    <recommendedName>
        <fullName>Poly(A) polymerase catalytic subunit</fullName>
        <ecNumber>2.7.7.19</ecNumber>
    </recommendedName>
    <alternativeName>
        <fullName>Poly(A) polymerase large subunit</fullName>
        <shortName>PAP-L</shortName>
    </alternativeName>
</protein>